<dbReference type="EC" id="2.6.1.87" evidence="1"/>
<dbReference type="EMBL" id="AP009240">
    <property type="protein sequence ID" value="BAG78036.1"/>
    <property type="status" value="ALT_INIT"/>
    <property type="molecule type" value="Genomic_DNA"/>
</dbReference>
<dbReference type="RefSeq" id="WP_001388277.1">
    <property type="nucleotide sequence ID" value="NC_011415.1"/>
</dbReference>
<dbReference type="SMR" id="B6I7J6"/>
<dbReference type="GeneID" id="93774921"/>
<dbReference type="KEGG" id="ecy:ECSE_2512"/>
<dbReference type="HOGENOM" id="CLU_033332_0_3_6"/>
<dbReference type="UniPathway" id="UPA00030"/>
<dbReference type="UniPathway" id="UPA00032">
    <property type="reaction ID" value="UER00493"/>
</dbReference>
<dbReference type="Proteomes" id="UP000008199">
    <property type="component" value="Chromosome"/>
</dbReference>
<dbReference type="GO" id="GO:0016020">
    <property type="term" value="C:membrane"/>
    <property type="evidence" value="ECO:0007669"/>
    <property type="project" value="GOC"/>
</dbReference>
<dbReference type="GO" id="GO:0030170">
    <property type="term" value="F:pyridoxal phosphate binding"/>
    <property type="evidence" value="ECO:0007669"/>
    <property type="project" value="TreeGrafter"/>
</dbReference>
<dbReference type="GO" id="GO:0099620">
    <property type="term" value="F:UDP-4-amino-4-deoxy-L-arabinose aminotransferase"/>
    <property type="evidence" value="ECO:0007669"/>
    <property type="project" value="UniProtKB-EC"/>
</dbReference>
<dbReference type="GO" id="GO:0009245">
    <property type="term" value="P:lipid A biosynthetic process"/>
    <property type="evidence" value="ECO:0007669"/>
    <property type="project" value="UniProtKB-KW"/>
</dbReference>
<dbReference type="GO" id="GO:0009103">
    <property type="term" value="P:lipopolysaccharide biosynthetic process"/>
    <property type="evidence" value="ECO:0007669"/>
    <property type="project" value="UniProtKB-UniRule"/>
</dbReference>
<dbReference type="GO" id="GO:0046677">
    <property type="term" value="P:response to antibiotic"/>
    <property type="evidence" value="ECO:0007669"/>
    <property type="project" value="UniProtKB-KW"/>
</dbReference>
<dbReference type="CDD" id="cd00616">
    <property type="entry name" value="AHBA_syn"/>
    <property type="match status" value="1"/>
</dbReference>
<dbReference type="FunFam" id="3.40.640.10:FF:000040">
    <property type="entry name" value="UDP-4-amino-4-deoxy-L-arabinose--oxoglutarate aminotransferase"/>
    <property type="match status" value="1"/>
</dbReference>
<dbReference type="FunFam" id="3.90.1150.10:FF:000030">
    <property type="entry name" value="UDP-4-amino-4-deoxy-L-arabinose--oxoglutarate aminotransferase"/>
    <property type="match status" value="1"/>
</dbReference>
<dbReference type="Gene3D" id="3.90.1150.10">
    <property type="entry name" value="Aspartate Aminotransferase, domain 1"/>
    <property type="match status" value="1"/>
</dbReference>
<dbReference type="Gene3D" id="3.40.640.10">
    <property type="entry name" value="Type I PLP-dependent aspartate aminotransferase-like (Major domain)"/>
    <property type="match status" value="1"/>
</dbReference>
<dbReference type="HAMAP" id="MF_01167">
    <property type="entry name" value="ArnB_transfer"/>
    <property type="match status" value="1"/>
</dbReference>
<dbReference type="InterPro" id="IPR022850">
    <property type="entry name" value="ArnB_NH2Trfase"/>
</dbReference>
<dbReference type="InterPro" id="IPR000653">
    <property type="entry name" value="DegT/StrS_aminotransferase"/>
</dbReference>
<dbReference type="InterPro" id="IPR015424">
    <property type="entry name" value="PyrdxlP-dep_Trfase"/>
</dbReference>
<dbReference type="InterPro" id="IPR015421">
    <property type="entry name" value="PyrdxlP-dep_Trfase_major"/>
</dbReference>
<dbReference type="InterPro" id="IPR015422">
    <property type="entry name" value="PyrdxlP-dep_Trfase_small"/>
</dbReference>
<dbReference type="NCBIfam" id="NF008658">
    <property type="entry name" value="PRK11658.1"/>
    <property type="match status" value="1"/>
</dbReference>
<dbReference type="PANTHER" id="PTHR30244">
    <property type="entry name" value="TRANSAMINASE"/>
    <property type="match status" value="1"/>
</dbReference>
<dbReference type="PANTHER" id="PTHR30244:SF41">
    <property type="entry name" value="UDP-4-AMINO-4-DEOXY-L-ARABINOSE--OXOGLUTARATE AMINOTRANSFERASE"/>
    <property type="match status" value="1"/>
</dbReference>
<dbReference type="Pfam" id="PF01041">
    <property type="entry name" value="DegT_DnrJ_EryC1"/>
    <property type="match status" value="1"/>
</dbReference>
<dbReference type="PIRSF" id="PIRSF000390">
    <property type="entry name" value="PLP_StrS"/>
    <property type="match status" value="1"/>
</dbReference>
<dbReference type="SUPFAM" id="SSF53383">
    <property type="entry name" value="PLP-dependent transferases"/>
    <property type="match status" value="1"/>
</dbReference>
<proteinExistence type="inferred from homology"/>
<gene>
    <name evidence="1" type="primary">arnB</name>
    <name type="ordered locus">ECSE_2512</name>
</gene>
<evidence type="ECO:0000255" key="1">
    <source>
        <dbReference type="HAMAP-Rule" id="MF_01167"/>
    </source>
</evidence>
<evidence type="ECO:0000305" key="2"/>
<reference key="1">
    <citation type="journal article" date="2008" name="DNA Res.">
        <title>Complete genome sequence and comparative analysis of the wild-type commensal Escherichia coli strain SE11 isolated from a healthy adult.</title>
        <authorList>
            <person name="Oshima K."/>
            <person name="Toh H."/>
            <person name="Ogura Y."/>
            <person name="Sasamoto H."/>
            <person name="Morita H."/>
            <person name="Park S.-H."/>
            <person name="Ooka T."/>
            <person name="Iyoda S."/>
            <person name="Taylor T.D."/>
            <person name="Hayashi T."/>
            <person name="Itoh K."/>
            <person name="Hattori M."/>
        </authorList>
    </citation>
    <scope>NUCLEOTIDE SEQUENCE [LARGE SCALE GENOMIC DNA]</scope>
    <source>
        <strain>SE11</strain>
    </source>
</reference>
<sequence>MSEFLPFSRPAMGVEELAAVKEVLESGWITTGPKNQALEQAFCQLTGNQHAIAVSSATAGMHITLMALEIGKGDEVITPSLTWVSTLNMISLLGATPVMVDVDRDTLMVTPEAIESAITPRTKAIIPVHYAGAPADIDAIRAIGERYGIAVIEDAAHAVGTYYKGRHIGAKGTAIFSFHAIKNITCAEGGLIVTDNENLARQLRMLKFHGLGVDAYDRQTWGRAPQAEVLTPGYKYNLTDINAAIALTQLAKLEHLNTRRREIAQQYQQALAALPFQPLSLPAWPHVHAWHLFIIRVDEQRCGISRDALMEALKERGIGTGLHFRAAHTQKYYRERFPTLSLPNTEWNSERICSLPLFPDMTTADADRVITALQQLAGQ</sequence>
<feature type="chain" id="PRO_0000380532" description="UDP-4-amino-4-deoxy-L-arabinose--oxoglutarate aminotransferase">
    <location>
        <begin position="1"/>
        <end position="379"/>
    </location>
</feature>
<feature type="modified residue" description="N6-(pyridoxal phosphate)lysine" evidence="1">
    <location>
        <position position="182"/>
    </location>
</feature>
<name>ARNB_ECOSE</name>
<keyword id="KW-0032">Aminotransferase</keyword>
<keyword id="KW-0046">Antibiotic resistance</keyword>
<keyword id="KW-0441">Lipid A biosynthesis</keyword>
<keyword id="KW-0444">Lipid biosynthesis</keyword>
<keyword id="KW-0443">Lipid metabolism</keyword>
<keyword id="KW-0448">Lipopolysaccharide biosynthesis</keyword>
<keyword id="KW-0663">Pyridoxal phosphate</keyword>
<keyword id="KW-0808">Transferase</keyword>
<comment type="function">
    <text evidence="1">Catalyzes the conversion of UDP-4-keto-arabinose (UDP-Ara4O) to UDP-4-amino-4-deoxy-L-arabinose (UDP-L-Ara4N). The modified arabinose is attached to lipid A and is required for resistance to polymyxin and cationic antimicrobial peptides.</text>
</comment>
<comment type="catalytic activity">
    <reaction evidence="1">
        <text>UDP-4-amino-4-deoxy-beta-L-arabinose + 2-oxoglutarate = UDP-beta-L-threo-pentopyranos-4-ulose + L-glutamate</text>
        <dbReference type="Rhea" id="RHEA:24710"/>
        <dbReference type="ChEBI" id="CHEBI:16810"/>
        <dbReference type="ChEBI" id="CHEBI:29985"/>
        <dbReference type="ChEBI" id="CHEBI:58708"/>
        <dbReference type="ChEBI" id="CHEBI:58710"/>
        <dbReference type="EC" id="2.6.1.87"/>
    </reaction>
</comment>
<comment type="cofactor">
    <cofactor evidence="1">
        <name>pyridoxal 5'-phosphate</name>
        <dbReference type="ChEBI" id="CHEBI:597326"/>
    </cofactor>
</comment>
<comment type="pathway">
    <text evidence="1">Nucleotide-sugar biosynthesis; UDP-4-deoxy-4-formamido-beta-L-arabinose biosynthesis; UDP-4-deoxy-4-formamido-beta-L-arabinose from UDP-alpha-D-glucuronate: step 2/3.</text>
</comment>
<comment type="pathway">
    <text evidence="1">Bacterial outer membrane biogenesis; lipopolysaccharide biosynthesis.</text>
</comment>
<comment type="subunit">
    <text evidence="1">Homodimer.</text>
</comment>
<comment type="similarity">
    <text evidence="1">Belongs to the DegT/DnrJ/EryC1 family. ArnB subfamily.</text>
</comment>
<comment type="sequence caution" evidence="2">
    <conflict type="erroneous initiation">
        <sequence resource="EMBL-CDS" id="BAG78036"/>
    </conflict>
</comment>
<organism>
    <name type="scientific">Escherichia coli (strain SE11)</name>
    <dbReference type="NCBI Taxonomy" id="409438"/>
    <lineage>
        <taxon>Bacteria</taxon>
        <taxon>Pseudomonadati</taxon>
        <taxon>Pseudomonadota</taxon>
        <taxon>Gammaproteobacteria</taxon>
        <taxon>Enterobacterales</taxon>
        <taxon>Enterobacteriaceae</taxon>
        <taxon>Escherichia</taxon>
    </lineage>
</organism>
<protein>
    <recommendedName>
        <fullName evidence="1">UDP-4-amino-4-deoxy-L-arabinose--oxoglutarate aminotransferase</fullName>
        <ecNumber evidence="1">2.6.1.87</ecNumber>
    </recommendedName>
    <alternativeName>
        <fullName evidence="1">UDP-(beta-L-threo-pentapyranosyl-4''-ulose diphosphate) aminotransferase</fullName>
        <shortName evidence="1">UDP-Ara4O aminotransferase</shortName>
    </alternativeName>
    <alternativeName>
        <fullName evidence="1">UDP-4-amino-4-deoxy-L-arabinose aminotransferase</fullName>
    </alternativeName>
</protein>
<accession>B6I7J6</accession>